<name>SURE_SALCH</name>
<proteinExistence type="inferred from homology"/>
<dbReference type="EC" id="3.1.3.5" evidence="1"/>
<dbReference type="EC" id="3.1.3.6" evidence="1"/>
<dbReference type="EC" id="3.6.1.11" evidence="1"/>
<dbReference type="EMBL" id="AE017220">
    <property type="protein sequence ID" value="AAX66765.1"/>
    <property type="molecule type" value="Genomic_DNA"/>
</dbReference>
<dbReference type="RefSeq" id="WP_001221538.1">
    <property type="nucleotide sequence ID" value="NC_006905.1"/>
</dbReference>
<dbReference type="SMR" id="Q57KJ7"/>
<dbReference type="KEGG" id="sec:SCH_2859"/>
<dbReference type="HOGENOM" id="CLU_045192_1_2_6"/>
<dbReference type="Proteomes" id="UP000000538">
    <property type="component" value="Chromosome"/>
</dbReference>
<dbReference type="GO" id="GO:0005737">
    <property type="term" value="C:cytoplasm"/>
    <property type="evidence" value="ECO:0007669"/>
    <property type="project" value="UniProtKB-SubCell"/>
</dbReference>
<dbReference type="GO" id="GO:0008254">
    <property type="term" value="F:3'-nucleotidase activity"/>
    <property type="evidence" value="ECO:0007669"/>
    <property type="project" value="UniProtKB-UniRule"/>
</dbReference>
<dbReference type="GO" id="GO:0008253">
    <property type="term" value="F:5'-nucleotidase activity"/>
    <property type="evidence" value="ECO:0007669"/>
    <property type="project" value="UniProtKB-UniRule"/>
</dbReference>
<dbReference type="GO" id="GO:0004309">
    <property type="term" value="F:exopolyphosphatase activity"/>
    <property type="evidence" value="ECO:0007669"/>
    <property type="project" value="UniProtKB-UniRule"/>
</dbReference>
<dbReference type="GO" id="GO:0046872">
    <property type="term" value="F:metal ion binding"/>
    <property type="evidence" value="ECO:0007669"/>
    <property type="project" value="UniProtKB-UniRule"/>
</dbReference>
<dbReference type="GO" id="GO:0000166">
    <property type="term" value="F:nucleotide binding"/>
    <property type="evidence" value="ECO:0007669"/>
    <property type="project" value="UniProtKB-KW"/>
</dbReference>
<dbReference type="FunFam" id="3.40.1210.10:FF:000001">
    <property type="entry name" value="5'/3'-nucleotidase SurE"/>
    <property type="match status" value="1"/>
</dbReference>
<dbReference type="Gene3D" id="3.40.1210.10">
    <property type="entry name" value="Survival protein SurE-like phosphatase/nucleotidase"/>
    <property type="match status" value="1"/>
</dbReference>
<dbReference type="HAMAP" id="MF_00060">
    <property type="entry name" value="SurE"/>
    <property type="match status" value="1"/>
</dbReference>
<dbReference type="InterPro" id="IPR030048">
    <property type="entry name" value="SurE"/>
</dbReference>
<dbReference type="InterPro" id="IPR002828">
    <property type="entry name" value="SurE-like_Pase/nucleotidase"/>
</dbReference>
<dbReference type="InterPro" id="IPR036523">
    <property type="entry name" value="SurE-like_sf"/>
</dbReference>
<dbReference type="NCBIfam" id="NF001488">
    <property type="entry name" value="PRK00346.1-1"/>
    <property type="match status" value="1"/>
</dbReference>
<dbReference type="NCBIfam" id="NF001489">
    <property type="entry name" value="PRK00346.1-3"/>
    <property type="match status" value="1"/>
</dbReference>
<dbReference type="NCBIfam" id="NF001490">
    <property type="entry name" value="PRK00346.1-4"/>
    <property type="match status" value="1"/>
</dbReference>
<dbReference type="NCBIfam" id="TIGR00087">
    <property type="entry name" value="surE"/>
    <property type="match status" value="1"/>
</dbReference>
<dbReference type="PANTHER" id="PTHR30457">
    <property type="entry name" value="5'-NUCLEOTIDASE SURE"/>
    <property type="match status" value="1"/>
</dbReference>
<dbReference type="PANTHER" id="PTHR30457:SF12">
    <property type="entry name" value="5'_3'-NUCLEOTIDASE SURE"/>
    <property type="match status" value="1"/>
</dbReference>
<dbReference type="Pfam" id="PF01975">
    <property type="entry name" value="SurE"/>
    <property type="match status" value="1"/>
</dbReference>
<dbReference type="SUPFAM" id="SSF64167">
    <property type="entry name" value="SurE-like"/>
    <property type="match status" value="1"/>
</dbReference>
<sequence length="253" mass="26980">MRILLSNDDGVHAPGIQTLAKALREFADVQVVAPDRNRSGASNSLTLESSLRTFTFDNGDIAVQMGTPTDCVYLGVNALMRPRPDIVVSGINAGPNLGDDVIYSGTVAAAMEGRHLGFPALAVSLNGYQHYDTAAAVTCALLRGLSREPLRTGRILNVNVPDLPLAQVKGIRVTRCGSRHPADKVIPQEDPRGNTLYWIGPPGDKYDAGPDTDFAAVDEGYVSVTPLHVDLTAHSAHDVVSDWLDSVGVGTQW</sequence>
<protein>
    <recommendedName>
        <fullName evidence="1">5'/3'-nucleotidase SurE</fullName>
        <ecNumber evidence="1">3.1.3.5</ecNumber>
        <ecNumber evidence="1">3.1.3.6</ecNumber>
    </recommendedName>
    <alternativeName>
        <fullName evidence="1">Exopolyphosphatase</fullName>
        <ecNumber evidence="1">3.6.1.11</ecNumber>
    </alternativeName>
    <alternativeName>
        <fullName evidence="1">Nucleoside monophosphate phosphohydrolase</fullName>
    </alternativeName>
</protein>
<organism>
    <name type="scientific">Salmonella choleraesuis (strain SC-B67)</name>
    <dbReference type="NCBI Taxonomy" id="321314"/>
    <lineage>
        <taxon>Bacteria</taxon>
        <taxon>Pseudomonadati</taxon>
        <taxon>Pseudomonadota</taxon>
        <taxon>Gammaproteobacteria</taxon>
        <taxon>Enterobacterales</taxon>
        <taxon>Enterobacteriaceae</taxon>
        <taxon>Salmonella</taxon>
    </lineage>
</organism>
<accession>Q57KJ7</accession>
<reference key="1">
    <citation type="journal article" date="2005" name="Nucleic Acids Res.">
        <title>The genome sequence of Salmonella enterica serovar Choleraesuis, a highly invasive and resistant zoonotic pathogen.</title>
        <authorList>
            <person name="Chiu C.-H."/>
            <person name="Tang P."/>
            <person name="Chu C."/>
            <person name="Hu S."/>
            <person name="Bao Q."/>
            <person name="Yu J."/>
            <person name="Chou Y.-Y."/>
            <person name="Wang H.-S."/>
            <person name="Lee Y.-S."/>
        </authorList>
    </citation>
    <scope>NUCLEOTIDE SEQUENCE [LARGE SCALE GENOMIC DNA]</scope>
    <source>
        <strain>SC-B67</strain>
    </source>
</reference>
<gene>
    <name evidence="1" type="primary">surE</name>
    <name type="ordered locus">SCH_2859</name>
</gene>
<comment type="function">
    <text evidence="1">Nucleotidase with a broad substrate specificity as it can dephosphorylate various ribo- and deoxyribonucleoside 5'-monophosphates and ribonucleoside 3'-monophosphates with highest affinity to 3'-AMP. Also hydrolyzes polyphosphate (exopolyphosphatase activity) with the preference for short-chain-length substrates (P20-25). Might be involved in the regulation of dNTP and NTP pools, and in the turnover of 3'-mononucleotides produced by numerous intracellular RNases (T1, T2, and F) during the degradation of various RNAs.</text>
</comment>
<comment type="catalytic activity">
    <reaction evidence="1">
        <text>a ribonucleoside 5'-phosphate + H2O = a ribonucleoside + phosphate</text>
        <dbReference type="Rhea" id="RHEA:12484"/>
        <dbReference type="ChEBI" id="CHEBI:15377"/>
        <dbReference type="ChEBI" id="CHEBI:18254"/>
        <dbReference type="ChEBI" id="CHEBI:43474"/>
        <dbReference type="ChEBI" id="CHEBI:58043"/>
        <dbReference type="EC" id="3.1.3.5"/>
    </reaction>
</comment>
<comment type="catalytic activity">
    <reaction evidence="1">
        <text>a ribonucleoside 3'-phosphate + H2O = a ribonucleoside + phosphate</text>
        <dbReference type="Rhea" id="RHEA:10144"/>
        <dbReference type="ChEBI" id="CHEBI:13197"/>
        <dbReference type="ChEBI" id="CHEBI:15377"/>
        <dbReference type="ChEBI" id="CHEBI:18254"/>
        <dbReference type="ChEBI" id="CHEBI:43474"/>
        <dbReference type="EC" id="3.1.3.6"/>
    </reaction>
</comment>
<comment type="catalytic activity">
    <reaction evidence="1">
        <text>[phosphate](n) + H2O = [phosphate](n-1) + phosphate + H(+)</text>
        <dbReference type="Rhea" id="RHEA:21528"/>
        <dbReference type="Rhea" id="RHEA-COMP:9859"/>
        <dbReference type="Rhea" id="RHEA-COMP:14279"/>
        <dbReference type="ChEBI" id="CHEBI:15377"/>
        <dbReference type="ChEBI" id="CHEBI:15378"/>
        <dbReference type="ChEBI" id="CHEBI:16838"/>
        <dbReference type="ChEBI" id="CHEBI:43474"/>
        <dbReference type="EC" id="3.6.1.11"/>
    </reaction>
</comment>
<comment type="cofactor">
    <cofactor evidence="1">
        <name>a divalent metal cation</name>
        <dbReference type="ChEBI" id="CHEBI:60240"/>
    </cofactor>
    <text evidence="1">Binds 1 divalent metal cation per subunit.</text>
</comment>
<comment type="subcellular location">
    <subcellularLocation>
        <location evidence="1">Cytoplasm</location>
    </subcellularLocation>
</comment>
<comment type="similarity">
    <text evidence="1">Belongs to the SurE nucleotidase family.</text>
</comment>
<evidence type="ECO:0000255" key="1">
    <source>
        <dbReference type="HAMAP-Rule" id="MF_00060"/>
    </source>
</evidence>
<keyword id="KW-0963">Cytoplasm</keyword>
<keyword id="KW-0378">Hydrolase</keyword>
<keyword id="KW-0479">Metal-binding</keyword>
<keyword id="KW-0547">Nucleotide-binding</keyword>
<feature type="chain" id="PRO_0000235647" description="5'/3'-nucleotidase SurE">
    <location>
        <begin position="1"/>
        <end position="253"/>
    </location>
</feature>
<feature type="binding site" evidence="1">
    <location>
        <position position="8"/>
    </location>
    <ligand>
        <name>a divalent metal cation</name>
        <dbReference type="ChEBI" id="CHEBI:60240"/>
    </ligand>
</feature>
<feature type="binding site" evidence="1">
    <location>
        <position position="9"/>
    </location>
    <ligand>
        <name>a divalent metal cation</name>
        <dbReference type="ChEBI" id="CHEBI:60240"/>
    </ligand>
</feature>
<feature type="binding site" evidence="1">
    <location>
        <position position="39"/>
    </location>
    <ligand>
        <name>a divalent metal cation</name>
        <dbReference type="ChEBI" id="CHEBI:60240"/>
    </ligand>
</feature>
<feature type="binding site" evidence="1">
    <location>
        <position position="92"/>
    </location>
    <ligand>
        <name>a divalent metal cation</name>
        <dbReference type="ChEBI" id="CHEBI:60240"/>
    </ligand>
</feature>